<gene>
    <name evidence="6" type="ORF">EHI_194540</name>
</gene>
<proteinExistence type="evidence at protein level"/>
<dbReference type="EMBL" id="X76904">
    <property type="protein sequence ID" value="CAA54226.1"/>
    <property type="molecule type" value="Genomic_DNA"/>
</dbReference>
<dbReference type="EMBL" id="DS571191">
    <property type="protein sequence ID" value="EDS89595.1"/>
    <property type="molecule type" value="Genomic_DNA"/>
</dbReference>
<dbReference type="PIR" id="S61440">
    <property type="entry name" value="S49144"/>
</dbReference>
<dbReference type="RefSeq" id="XP_001913632.1">
    <property type="nucleotide sequence ID" value="XM_001913597.1"/>
</dbReference>
<dbReference type="SMR" id="Q24824"/>
<dbReference type="TCDB" id="1.C.35.1.2">
    <property type="family name" value="the amoebapore (amoebapore) family"/>
</dbReference>
<dbReference type="EnsemblProtists" id="GAT94426">
    <property type="protein sequence ID" value="GAT94426"/>
    <property type="gene ID" value="CL6EHI_194540"/>
</dbReference>
<dbReference type="EnsemblProtists" id="rna_EHI_194540-1">
    <property type="protein sequence ID" value="rna_EHI_194540-1"/>
    <property type="gene ID" value="EHI_194540"/>
</dbReference>
<dbReference type="GeneID" id="6219594"/>
<dbReference type="KEGG" id="ehi:EHI_194540"/>
<dbReference type="VEuPathDB" id="AmoebaDB:EHI5A_011850"/>
<dbReference type="VEuPathDB" id="AmoebaDB:EHI7A_005290"/>
<dbReference type="VEuPathDB" id="AmoebaDB:EHI8A_003320"/>
<dbReference type="VEuPathDB" id="AmoebaDB:EHI_194540"/>
<dbReference type="VEuPathDB" id="AmoebaDB:KM1_013430"/>
<dbReference type="HOGENOM" id="CLU_2337976_0_0_1"/>
<dbReference type="OMA" id="CKDTVDM"/>
<dbReference type="OrthoDB" id="69496at2759"/>
<dbReference type="Proteomes" id="UP000001926">
    <property type="component" value="Partially assembled WGS sequence"/>
</dbReference>
<dbReference type="GO" id="GO:0042742">
    <property type="term" value="P:defense response to bacterium"/>
    <property type="evidence" value="ECO:0007669"/>
    <property type="project" value="UniProtKB-KW"/>
</dbReference>
<dbReference type="Gene3D" id="1.10.225.10">
    <property type="entry name" value="Saposin-like"/>
    <property type="match status" value="1"/>
</dbReference>
<dbReference type="InterPro" id="IPR008138">
    <property type="entry name" value="SapB_2"/>
</dbReference>
<dbReference type="InterPro" id="IPR011001">
    <property type="entry name" value="Saposin-like"/>
</dbReference>
<dbReference type="InterPro" id="IPR008139">
    <property type="entry name" value="SaposinB_dom"/>
</dbReference>
<dbReference type="Pfam" id="PF03489">
    <property type="entry name" value="SapB_2"/>
    <property type="match status" value="1"/>
</dbReference>
<dbReference type="SMART" id="SM00741">
    <property type="entry name" value="SapB"/>
    <property type="match status" value="1"/>
</dbReference>
<dbReference type="SUPFAM" id="SSF47862">
    <property type="entry name" value="Saposin"/>
    <property type="match status" value="1"/>
</dbReference>
<dbReference type="PROSITE" id="PS50015">
    <property type="entry name" value="SAP_B"/>
    <property type="match status" value="1"/>
</dbReference>
<reference key="1">
    <citation type="journal article" date="1994" name="Mol. Microbiol.">
        <title>Amoebapores, a family of membranolytic peptides from cytoplasmic granules of Entamoeba histolytica: isolation, primary structure, and pore formation in bacterial cytoplasmic membranes.</title>
        <authorList>
            <person name="Leippe M."/>
            <person name="Andrae J."/>
            <person name="Nickel R."/>
            <person name="Tannich E."/>
            <person name="Mueller-Eberhard H.J."/>
        </authorList>
    </citation>
    <scope>NUCLEOTIDE SEQUENCE [GENOMIC DNA]</scope>
    <scope>PROTEIN SEQUENCE OF 20-63</scope>
    <scope>FUNCTION</scope>
    <scope>SUBCELLULAR LOCATION</scope>
    <scope>DEVELOPMENTAL STAGE</scope>
    <source>
        <strain>ATCC 30459 / HM-1:IMSS / ABRM</strain>
    </source>
</reference>
<reference evidence="6" key="2">
    <citation type="journal article" date="2005" name="Nature">
        <title>The genome of the protist parasite Entamoeba histolytica.</title>
        <authorList>
            <person name="Loftus B.J."/>
            <person name="Anderson I."/>
            <person name="Davies R."/>
            <person name="Alsmark U.C."/>
            <person name="Samuelson J."/>
            <person name="Amedeo P."/>
            <person name="Roncaglia P."/>
            <person name="Berriman M."/>
            <person name="Hirt R.P."/>
            <person name="Mann B.J."/>
            <person name="Nozaki T."/>
            <person name="Suh B."/>
            <person name="Pop M."/>
            <person name="Duchene M."/>
            <person name="Ackers J."/>
            <person name="Tannich E."/>
            <person name="Leippe M."/>
            <person name="Hofer M."/>
            <person name="Bruchhaus I."/>
            <person name="Willhoeft U."/>
            <person name="Bhattacharya A."/>
            <person name="Chillingworth T."/>
            <person name="Churcher C.M."/>
            <person name="Hance Z."/>
            <person name="Harris B."/>
            <person name="Harris D."/>
            <person name="Jagels K."/>
            <person name="Moule S."/>
            <person name="Mungall K.L."/>
            <person name="Ormond D."/>
            <person name="Squares R."/>
            <person name="Whitehead S."/>
            <person name="Quail M.A."/>
            <person name="Rabbinowitsch E."/>
            <person name="Norbertczak H."/>
            <person name="Price C."/>
            <person name="Wang Z."/>
            <person name="Guillen N."/>
            <person name="Gilchrist C."/>
            <person name="Stroup S.E."/>
            <person name="Bhattacharya S."/>
            <person name="Lohia A."/>
            <person name="Foster P.G."/>
            <person name="Sicheritz-Ponten T."/>
            <person name="Weber C."/>
            <person name="Singh U."/>
            <person name="Mukherjee C."/>
            <person name="El-Sayed N.M.A."/>
            <person name="Petri W.A."/>
            <person name="Clark C.G."/>
            <person name="Embley T.M."/>
            <person name="Barrell B.G."/>
            <person name="Fraser C.M."/>
            <person name="Hall N."/>
        </authorList>
    </citation>
    <scope>NUCLEOTIDE SEQUENCE [LARGE SCALE GENOMIC DNA]</scope>
    <source>
        <strain evidence="6">ATCC 30459 / HM-1:IMSS / ABRM</strain>
    </source>
</reference>
<comment type="function">
    <text evidence="4">Forms pores in the cell membrane of host cells (PubMed:7715451). Has antibacterial activity against M.luteus, no activity against E.coli (PubMed:7715451). Implicated in the cytolytic activity of the parasite (PubMed:7715451).</text>
</comment>
<comment type="subunit">
    <text evidence="1">Monomer (By similarity). Homodimer (By similarity). Hexamer; formed during insertion in the membrane (By similarity).</text>
</comment>
<comment type="subcellular location">
    <subcellularLocation>
        <location evidence="3">Cytoplasmic granule</location>
    </subcellularLocation>
</comment>
<comment type="developmental stage">
    <text evidence="4">Expressed in trophozoites (at protein level).</text>
</comment>
<protein>
    <recommendedName>
        <fullName evidence="5">Pore-forming peptide amoebapore B</fullName>
    </recommendedName>
    <alternativeName>
        <fullName>EH-APP B</fullName>
    </alternativeName>
</protein>
<organism>
    <name type="scientific">Entamoeba histolytica (strain ATCC 30459 / HM-1:IMSS / ABRM)</name>
    <dbReference type="NCBI Taxonomy" id="294381"/>
    <lineage>
        <taxon>Eukaryota</taxon>
        <taxon>Amoebozoa</taxon>
        <taxon>Evosea</taxon>
        <taxon>Archamoebae</taxon>
        <taxon>Mastigamoebida</taxon>
        <taxon>Entamoebidae</taxon>
        <taxon>Entamoeba</taxon>
    </lineage>
</organism>
<keyword id="KW-0044">Antibiotic</keyword>
<keyword id="KW-0929">Antimicrobial</keyword>
<keyword id="KW-0903">Direct protein sequencing</keyword>
<keyword id="KW-1015">Disulfide bond</keyword>
<keyword id="KW-1185">Reference proteome</keyword>
<keyword id="KW-0732">Signal</keyword>
<accession>Q24824</accession>
<accession>A0A175JLU5</accession>
<accession>B1N366</accession>
<sequence length="96" mass="10437">MRAIIFVLIFAIAFAATREGAILCNLCKDTVKLVENLLTVDGAQAVRQYIDNLCGKASGFLGTLCEKILSFGVDELVKLIENHVDPVVVCEKIHAC</sequence>
<evidence type="ECO:0000250" key="1">
    <source>
        <dbReference type="UniProtKB" id="P34095"/>
    </source>
</evidence>
<evidence type="ECO:0000255" key="2">
    <source>
        <dbReference type="PROSITE-ProRule" id="PRU00415"/>
    </source>
</evidence>
<evidence type="ECO:0000269" key="3">
    <source>
    </source>
</evidence>
<evidence type="ECO:0000269" key="4">
    <source>
    </source>
</evidence>
<evidence type="ECO:0000303" key="5">
    <source>
    </source>
</evidence>
<evidence type="ECO:0000312" key="6">
    <source>
        <dbReference type="EMBL" id="EDS89595.1"/>
    </source>
</evidence>
<name>PFPB_ENTH1</name>
<feature type="signal peptide" evidence="4">
    <location>
        <begin position="1"/>
        <end position="19"/>
    </location>
</feature>
<feature type="peptide" id="PRO_0000031669" description="Pore-forming peptide amoebapore B">
    <location>
        <begin position="20"/>
        <end position="96"/>
    </location>
</feature>
<feature type="domain" description="Saposin B-type" evidence="2">
    <location>
        <begin position="20"/>
        <end position="96"/>
    </location>
</feature>
<feature type="disulfide bond" evidence="2">
    <location>
        <begin position="24"/>
        <end position="96"/>
    </location>
</feature>
<feature type="disulfide bond" evidence="2">
    <location>
        <begin position="27"/>
        <end position="90"/>
    </location>
</feature>
<feature type="disulfide bond" evidence="2">
    <location>
        <begin position="54"/>
        <end position="65"/>
    </location>
</feature>